<gene>
    <name type="primary">TOP3A</name>
    <name type="synonym">TOP3</name>
</gene>
<sequence>MIFPVARYALRWLRRPEDRAFSRAAMEMALRGVRKVLCVAEKNDAAKGIADLLSNGRMRRREGLSKFNKIYEFDYHLYGQNVTMVMTSVSGHLLAHDFQMQFRKWQSCNPLVLFEAEIEKYCPENFVDIKKTLERETRQCQALVIWTDCDREGENIGFEIIHVCKAVKPNLQVLRARFSEITPHAVRTACENLTEPDQRVSDAVDVRQELDLRIGAAFTRFQTLRLQRIFPEVLAEQLISYGSCQFPTLGFVVERFKAIQAFVPEIFHRIKVTHDHKDGIVEFNWKRHRLFNHTACLVLYQLCVEDPMATVVEVRSKPKSKWRPQALDTVELEKLASRKLRINAKETMRIAEKLYTQGYISYPRTETNIFPRDLNLTVLVEQQTPDPRWGAFAQSILERGGPTPRNGNKSDQAHPPIHPTKYTNNLQGDEQRLYEFIVRHFLACCSQDAQGQETTVEIDIAQERFVAHGLMILARNYLDVYPYDHWSDKILPVYEQGSHFQPSTVEMVDGETSPPKLLTEADLIALMEKHGIGTDATHAEHIETIKARMYVGLTPDKRFLPGHLGMGLVEGYDSMGYEMSKPDLRAELEADLKLICDGKKDKFVVLRQQVQKYKQVFIEAVAKAKKLDEALAQYFGNGTELAQQEDIYPAMPEPIRKCPQCNKDMVLKTKKNGGFYLSCMGFPECRSAVWLPDSVLEASRDSSVCPVCQPHPVYRLKLKFKRGSLPPTMPLEFVCCIGGCDDTLREILDLRFSGGPPRASQPSGRLQANQSLNRMDNSQHPQPADSRQTGSSKALAQTLPPPTAAGESNSVTCNCGQEAVLLTVRKEGPNRGRQFFKCNGGSCNFFLWADSPNPGAGGPPALAYRPLGASLGCPPGPGIHLGGFGNPGDGSGSGTSCLCSQPSVTRTVQKDGPNKGRQFHTCAKPREQQCGFFQWVDENTAPGTSGAPSWTGDRGRTLESEARSKRPRASSSDMGSTAKKPRKCSLCHQPGHTRPFCPQNR</sequence>
<reference key="1">
    <citation type="journal article" date="1996" name="Proc. Natl. Acad. Sci. U.S.A.">
        <title>Human TOP3: a single-copy gene encoding DNA topoisomerase III.</title>
        <authorList>
            <person name="Hanai R."/>
            <person name="Caron P.R."/>
            <person name="Wang J.C."/>
        </authorList>
    </citation>
    <scope>NUCLEOTIDE SEQUENCE [MRNA] (ISOFORMS LONG AND SHORT)</scope>
    <scope>FUNCTION</scope>
    <scope>CATALYTIC ACTIVITY</scope>
</reference>
<reference key="2">
    <citation type="journal article" date="2011" name="Nucleic Acids Res.">
        <title>Identification of rare DNA variants in mitochondrial disorders with improved array-based sequencing.</title>
        <authorList>
            <person name="Wang W."/>
            <person name="Shen P."/>
            <person name="Thiyagarajan S."/>
            <person name="Lin S."/>
            <person name="Palm C."/>
            <person name="Horvath R."/>
            <person name="Klopstock T."/>
            <person name="Cutler D."/>
            <person name="Pique L."/>
            <person name="Schrijver I."/>
            <person name="Davis R.W."/>
            <person name="Mindrinos M."/>
            <person name="Speed T.P."/>
            <person name="Scharfe C."/>
        </authorList>
    </citation>
    <scope>NUCLEOTIDE SEQUENCE [GENOMIC DNA]</scope>
</reference>
<reference key="3">
    <citation type="journal article" date="2004" name="Nat. Genet.">
        <title>Complete sequencing and characterization of 21,243 full-length human cDNAs.</title>
        <authorList>
            <person name="Ota T."/>
            <person name="Suzuki Y."/>
            <person name="Nishikawa T."/>
            <person name="Otsuki T."/>
            <person name="Sugiyama T."/>
            <person name="Irie R."/>
            <person name="Wakamatsu A."/>
            <person name="Hayashi K."/>
            <person name="Sato H."/>
            <person name="Nagai K."/>
            <person name="Kimura K."/>
            <person name="Makita H."/>
            <person name="Sekine M."/>
            <person name="Obayashi M."/>
            <person name="Nishi T."/>
            <person name="Shibahara T."/>
            <person name="Tanaka T."/>
            <person name="Ishii S."/>
            <person name="Yamamoto J."/>
            <person name="Saito K."/>
            <person name="Kawai Y."/>
            <person name="Isono Y."/>
            <person name="Nakamura Y."/>
            <person name="Nagahari K."/>
            <person name="Murakami K."/>
            <person name="Yasuda T."/>
            <person name="Iwayanagi T."/>
            <person name="Wagatsuma M."/>
            <person name="Shiratori A."/>
            <person name="Sudo H."/>
            <person name="Hosoiri T."/>
            <person name="Kaku Y."/>
            <person name="Kodaira H."/>
            <person name="Kondo H."/>
            <person name="Sugawara M."/>
            <person name="Takahashi M."/>
            <person name="Kanda K."/>
            <person name="Yokoi T."/>
            <person name="Furuya T."/>
            <person name="Kikkawa E."/>
            <person name="Omura Y."/>
            <person name="Abe K."/>
            <person name="Kamihara K."/>
            <person name="Katsuta N."/>
            <person name="Sato K."/>
            <person name="Tanikawa M."/>
            <person name="Yamazaki M."/>
            <person name="Ninomiya K."/>
            <person name="Ishibashi T."/>
            <person name="Yamashita H."/>
            <person name="Murakawa K."/>
            <person name="Fujimori K."/>
            <person name="Tanai H."/>
            <person name="Kimata M."/>
            <person name="Watanabe M."/>
            <person name="Hiraoka S."/>
            <person name="Chiba Y."/>
            <person name="Ishida S."/>
            <person name="Ono Y."/>
            <person name="Takiguchi S."/>
            <person name="Watanabe S."/>
            <person name="Yosida M."/>
            <person name="Hotuta T."/>
            <person name="Kusano J."/>
            <person name="Kanehori K."/>
            <person name="Takahashi-Fujii A."/>
            <person name="Hara H."/>
            <person name="Tanase T.-O."/>
            <person name="Nomura Y."/>
            <person name="Togiya S."/>
            <person name="Komai F."/>
            <person name="Hara R."/>
            <person name="Takeuchi K."/>
            <person name="Arita M."/>
            <person name="Imose N."/>
            <person name="Musashino K."/>
            <person name="Yuuki H."/>
            <person name="Oshima A."/>
            <person name="Sasaki N."/>
            <person name="Aotsuka S."/>
            <person name="Yoshikawa Y."/>
            <person name="Matsunawa H."/>
            <person name="Ichihara T."/>
            <person name="Shiohata N."/>
            <person name="Sano S."/>
            <person name="Moriya S."/>
            <person name="Momiyama H."/>
            <person name="Satoh N."/>
            <person name="Takami S."/>
            <person name="Terashima Y."/>
            <person name="Suzuki O."/>
            <person name="Nakagawa S."/>
            <person name="Senoh A."/>
            <person name="Mizoguchi H."/>
            <person name="Goto Y."/>
            <person name="Shimizu F."/>
            <person name="Wakebe H."/>
            <person name="Hishigaki H."/>
            <person name="Watanabe T."/>
            <person name="Sugiyama A."/>
            <person name="Takemoto M."/>
            <person name="Kawakami B."/>
            <person name="Yamazaki M."/>
            <person name="Watanabe K."/>
            <person name="Kumagai A."/>
            <person name="Itakura S."/>
            <person name="Fukuzumi Y."/>
            <person name="Fujimori Y."/>
            <person name="Komiyama M."/>
            <person name="Tashiro H."/>
            <person name="Tanigami A."/>
            <person name="Fujiwara T."/>
            <person name="Ono T."/>
            <person name="Yamada K."/>
            <person name="Fujii Y."/>
            <person name="Ozaki K."/>
            <person name="Hirao M."/>
            <person name="Ohmori Y."/>
            <person name="Kawabata A."/>
            <person name="Hikiji T."/>
            <person name="Kobatake N."/>
            <person name="Inagaki H."/>
            <person name="Ikema Y."/>
            <person name="Okamoto S."/>
            <person name="Okitani R."/>
            <person name="Kawakami T."/>
            <person name="Noguchi S."/>
            <person name="Itoh T."/>
            <person name="Shigeta K."/>
            <person name="Senba T."/>
            <person name="Matsumura K."/>
            <person name="Nakajima Y."/>
            <person name="Mizuno T."/>
            <person name="Morinaga M."/>
            <person name="Sasaki M."/>
            <person name="Togashi T."/>
            <person name="Oyama M."/>
            <person name="Hata H."/>
            <person name="Watanabe M."/>
            <person name="Komatsu T."/>
            <person name="Mizushima-Sugano J."/>
            <person name="Satoh T."/>
            <person name="Shirai Y."/>
            <person name="Takahashi Y."/>
            <person name="Nakagawa K."/>
            <person name="Okumura K."/>
            <person name="Nagase T."/>
            <person name="Nomura N."/>
            <person name="Kikuchi H."/>
            <person name="Masuho Y."/>
            <person name="Yamashita R."/>
            <person name="Nakai K."/>
            <person name="Yada T."/>
            <person name="Nakamura Y."/>
            <person name="Ohara O."/>
            <person name="Isogai T."/>
            <person name="Sugano S."/>
        </authorList>
    </citation>
    <scope>NUCLEOTIDE SEQUENCE [LARGE SCALE MRNA] (ISOFORMS LONG AND 3)</scope>
    <source>
        <tissue>Thalamus</tissue>
        <tissue>Trachea</tissue>
    </source>
</reference>
<reference key="4">
    <citation type="journal article" date="2006" name="Nature">
        <title>DNA sequence of human chromosome 17 and analysis of rearrangement in the human lineage.</title>
        <authorList>
            <person name="Zody M.C."/>
            <person name="Garber M."/>
            <person name="Adams D.J."/>
            <person name="Sharpe T."/>
            <person name="Harrow J."/>
            <person name="Lupski J.R."/>
            <person name="Nicholson C."/>
            <person name="Searle S.M."/>
            <person name="Wilming L."/>
            <person name="Young S.K."/>
            <person name="Abouelleil A."/>
            <person name="Allen N.R."/>
            <person name="Bi W."/>
            <person name="Bloom T."/>
            <person name="Borowsky M.L."/>
            <person name="Bugalter B.E."/>
            <person name="Butler J."/>
            <person name="Chang J.L."/>
            <person name="Chen C.-K."/>
            <person name="Cook A."/>
            <person name="Corum B."/>
            <person name="Cuomo C.A."/>
            <person name="de Jong P.J."/>
            <person name="DeCaprio D."/>
            <person name="Dewar K."/>
            <person name="FitzGerald M."/>
            <person name="Gilbert J."/>
            <person name="Gibson R."/>
            <person name="Gnerre S."/>
            <person name="Goldstein S."/>
            <person name="Grafham D.V."/>
            <person name="Grocock R."/>
            <person name="Hafez N."/>
            <person name="Hagopian D.S."/>
            <person name="Hart E."/>
            <person name="Norman C.H."/>
            <person name="Humphray S."/>
            <person name="Jaffe D.B."/>
            <person name="Jones M."/>
            <person name="Kamal M."/>
            <person name="Khodiyar V.K."/>
            <person name="LaButti K."/>
            <person name="Laird G."/>
            <person name="Lehoczky J."/>
            <person name="Liu X."/>
            <person name="Lokyitsang T."/>
            <person name="Loveland J."/>
            <person name="Lui A."/>
            <person name="Macdonald P."/>
            <person name="Major J.E."/>
            <person name="Matthews L."/>
            <person name="Mauceli E."/>
            <person name="McCarroll S.A."/>
            <person name="Mihalev A.H."/>
            <person name="Mudge J."/>
            <person name="Nguyen C."/>
            <person name="Nicol R."/>
            <person name="O'Leary S.B."/>
            <person name="Osoegawa K."/>
            <person name="Schwartz D.C."/>
            <person name="Shaw-Smith C."/>
            <person name="Stankiewicz P."/>
            <person name="Steward C."/>
            <person name="Swarbreck D."/>
            <person name="Venkataraman V."/>
            <person name="Whittaker C.A."/>
            <person name="Yang X."/>
            <person name="Zimmer A.R."/>
            <person name="Bradley A."/>
            <person name="Hubbard T."/>
            <person name="Birren B.W."/>
            <person name="Rogers J."/>
            <person name="Lander E.S."/>
            <person name="Nusbaum C."/>
        </authorList>
    </citation>
    <scope>NUCLEOTIDE SEQUENCE [LARGE SCALE GENOMIC DNA]</scope>
</reference>
<reference key="5">
    <citation type="submission" date="2005-09" db="EMBL/GenBank/DDBJ databases">
        <authorList>
            <person name="Mural R.J."/>
            <person name="Istrail S."/>
            <person name="Sutton G.G."/>
            <person name="Florea L."/>
            <person name="Halpern A.L."/>
            <person name="Mobarry C.M."/>
            <person name="Lippert R."/>
            <person name="Walenz B."/>
            <person name="Shatkay H."/>
            <person name="Dew I."/>
            <person name="Miller J.R."/>
            <person name="Flanigan M.J."/>
            <person name="Edwards N.J."/>
            <person name="Bolanos R."/>
            <person name="Fasulo D."/>
            <person name="Halldorsson B.V."/>
            <person name="Hannenhalli S."/>
            <person name="Turner R."/>
            <person name="Yooseph S."/>
            <person name="Lu F."/>
            <person name="Nusskern D.R."/>
            <person name="Shue B.C."/>
            <person name="Zheng X.H."/>
            <person name="Zhong F."/>
            <person name="Delcher A.L."/>
            <person name="Huson D.H."/>
            <person name="Kravitz S.A."/>
            <person name="Mouchard L."/>
            <person name="Reinert K."/>
            <person name="Remington K.A."/>
            <person name="Clark A.G."/>
            <person name="Waterman M.S."/>
            <person name="Eichler E.E."/>
            <person name="Adams M.D."/>
            <person name="Hunkapiller M.W."/>
            <person name="Myers E.W."/>
            <person name="Venter J.C."/>
        </authorList>
    </citation>
    <scope>NUCLEOTIDE SEQUENCE [LARGE SCALE GENOMIC DNA]</scope>
</reference>
<reference key="6">
    <citation type="journal article" date="2004" name="Genome Res.">
        <title>The status, quality, and expansion of the NIH full-length cDNA project: the Mammalian Gene Collection (MGC).</title>
        <authorList>
            <consortium name="The MGC Project Team"/>
        </authorList>
    </citation>
    <scope>NUCLEOTIDE SEQUENCE [LARGE SCALE MRNA] (ISOFORM LONG)</scope>
    <source>
        <tissue>Testis</tissue>
    </source>
</reference>
<reference key="7">
    <citation type="journal article" date="2005" name="EMBO J.">
        <title>BLAP75, an essential component of Bloom's syndrome protein complexes that maintain genome integrity.</title>
        <authorList>
            <person name="Yin J."/>
            <person name="Sobeck A."/>
            <person name="Xu C."/>
            <person name="Meetei A.R."/>
            <person name="Hoatlin M."/>
            <person name="Li L."/>
            <person name="Wang W."/>
        </authorList>
    </citation>
    <scope>IDENTIFICATION IN COMPLEX WITH BLM AND RMI1</scope>
</reference>
<reference key="8">
    <citation type="journal article" date="2008" name="Genes Dev.">
        <title>RMI, a new OB-fold complex essential for Bloom syndrome protein to maintain genome stability.</title>
        <authorList>
            <person name="Xu D."/>
            <person name="Guo R."/>
            <person name="Sobeck A."/>
            <person name="Bachrati C.Z."/>
            <person name="Yang J."/>
            <person name="Enomoto T."/>
            <person name="Brown G.W."/>
            <person name="Hoatlin M.E."/>
            <person name="Hickson I.D."/>
            <person name="Wang W."/>
        </authorList>
    </citation>
    <scope>IDENTIFICATION IN THE RMI COMPLEX</scope>
</reference>
<reference key="9">
    <citation type="journal article" date="2008" name="Genes Dev.">
        <title>BLAP18/RMI2, a novel OB-fold-containing protein, is an essential component of the Bloom helicase-double Holliday junction dissolvasome.</title>
        <authorList>
            <person name="Singh T.R."/>
            <person name="Ali A.M."/>
            <person name="Busygina V."/>
            <person name="Raynard S."/>
            <person name="Fan Q."/>
            <person name="Du C.-H."/>
            <person name="Andreassen P.R."/>
            <person name="Sung P."/>
            <person name="Meetei A.R."/>
        </authorList>
    </citation>
    <scope>IDENTIFICATION IN THE RMI COMPLEX</scope>
</reference>
<reference key="10">
    <citation type="journal article" date="2008" name="Proc. Natl. Acad. Sci. U.S.A.">
        <title>A quantitative atlas of mitotic phosphorylation.</title>
        <authorList>
            <person name="Dephoure N."/>
            <person name="Zhou C."/>
            <person name="Villen J."/>
            <person name="Beausoleil S.A."/>
            <person name="Bakalarski C.E."/>
            <person name="Elledge S.J."/>
            <person name="Gygi S.P."/>
        </authorList>
    </citation>
    <scope>IDENTIFICATION BY MASS SPECTROMETRY [LARGE SCALE ANALYSIS]</scope>
    <source>
        <tissue>Cervix carcinoma</tissue>
    </source>
</reference>
<reference key="11">
    <citation type="journal article" date="2010" name="J. Biol. Chem.">
        <title>Human topoisomerase IIIalpha is a single-stranded DNA decatenase that is stimulated by BLM and RMI1.</title>
        <authorList>
            <person name="Yang J."/>
            <person name="Bachrati C.Z."/>
            <person name="Ou J."/>
            <person name="Hickson I.D."/>
            <person name="Brown G.W."/>
        </authorList>
    </citation>
    <scope>FUNCTION</scope>
    <scope>CATALYTIC ACTIVITY</scope>
    <scope>SUBUNIT</scope>
    <scope>COFACTOR</scope>
    <scope>INTERACTION WITH RMI1</scope>
</reference>
<reference key="12">
    <citation type="journal article" date="2013" name="Proc. Natl. Acad. Sci. U.S.A.">
        <title>Scaffolding protein SPIDR/KIAA0146 connects the Bloom syndrome helicase with homologous recombination repair.</title>
        <authorList>
            <person name="Wan L."/>
            <person name="Han J."/>
            <person name="Liu T."/>
            <person name="Dong S."/>
            <person name="Xie F."/>
            <person name="Chen H."/>
            <person name="Huang J."/>
        </authorList>
    </citation>
    <scope>INTERACTION WITH BLM</scope>
</reference>
<reference key="13">
    <citation type="journal article" date="2018" name="Am. J. Hum. Genet.">
        <title>Mutations in TOP3A cause a Bloom syndrome-like disorder.</title>
        <authorList>
            <consortium name="GOSgene"/>
            <person name="Martin C.A."/>
            <person name="Sarlos K."/>
            <person name="Logan C.V."/>
            <person name="Thakur R.S."/>
            <person name="Parry D.A."/>
            <person name="Bizard A.H."/>
            <person name="Leitch A."/>
            <person name="Cleal L."/>
            <person name="Ali N.S."/>
            <person name="Al-Owain M.A."/>
            <person name="Allen W."/>
            <person name="Altmueller J."/>
            <person name="Aza-Carmona M."/>
            <person name="Barakat B.A.Y."/>
            <person name="Barraza-Garcia J."/>
            <person name="Begtrup A."/>
            <person name="Bogliolo M."/>
            <person name="Cho M.T."/>
            <person name="Cruz-Rojo J."/>
            <person name="Dhahrabi H.A.M."/>
            <person name="Elcioglu N.H."/>
            <person name="Gorman G.S."/>
            <person name="Jobling R."/>
            <person name="Kesterton I."/>
            <person name="Kishita Y."/>
            <person name="Kohda M."/>
            <person name="Le Quesne Stabej P."/>
            <person name="Malallah A.J."/>
            <person name="Nuernberg P."/>
            <person name="Ohtake A."/>
            <person name="Okazaki Y."/>
            <person name="Pujol R."/>
            <person name="Ramirez M.J."/>
            <person name="Revah-Politi A."/>
            <person name="Shimura M."/>
            <person name="Stevens P."/>
            <person name="Taylor R.W."/>
            <person name="Turner L."/>
            <person name="Williams H."/>
            <person name="Wilson C."/>
            <person name="Yigit G."/>
            <person name="Zahavich L."/>
            <person name="Alkuraya F.S."/>
            <person name="Surralles J."/>
            <person name="Iglesias A."/>
            <person name="Murayama K."/>
            <person name="Wollnik B."/>
            <person name="Dattani M."/>
            <person name="Heath K.E."/>
            <person name="Hickson I.D."/>
            <person name="Jackson A.P."/>
        </authorList>
    </citation>
    <scope>FUNCTION</scope>
    <scope>INVOLVEMENT IN MGRISCE2</scope>
    <scope>VARIANT MGRISCE2 VAL-176</scope>
</reference>
<reference key="14">
    <citation type="journal article" date="2018" name="Mol. Cell">
        <title>Topoisomerase 3alpha is required for decatenation and segregation of human mtDNA.</title>
        <authorList>
            <person name="Nicholls T.J."/>
            <person name="Nadalutti C.A."/>
            <person name="Motori E."/>
            <person name="Sommerville E.W."/>
            <person name="Gorman G.S."/>
            <person name="Basu S."/>
            <person name="Hoberg E."/>
            <person name="Turnbull D.M."/>
            <person name="Chinnery P.F."/>
            <person name="Larsson N.G."/>
            <person name="Larsson E."/>
            <person name="Falkenberg M."/>
            <person name="Taylor R.W."/>
            <person name="Griffith J.D."/>
            <person name="Gustafsson C.M."/>
        </authorList>
    </citation>
    <scope>FUNCTION</scope>
    <scope>SUBUNIT</scope>
    <scope>SUBCELLULAR LOCATION</scope>
    <scope>INVOLVEMENT IN PEOB5</scope>
    <scope>VARIANTS PEOB5 VAL-100 AND 135-ARG--ARG-1001 DEL</scope>
    <scope>CHARACTERIZATION OF VARIANT PEOB5 VAL-100</scope>
    <scope>MUTAGENESIS OF TYR-362</scope>
</reference>
<dbReference type="EC" id="5.6.2.1" evidence="5 10 14"/>
<dbReference type="EMBL" id="U43431">
    <property type="protein sequence ID" value="AAB03694.1"/>
    <property type="molecule type" value="mRNA"/>
</dbReference>
<dbReference type="EMBL" id="U43431">
    <property type="protein sequence ID" value="AAB03695.1"/>
    <property type="molecule type" value="mRNA"/>
</dbReference>
<dbReference type="EMBL" id="HQ205026">
    <property type="protein sequence ID" value="ADP90454.1"/>
    <property type="molecule type" value="Genomic_DNA"/>
</dbReference>
<dbReference type="EMBL" id="HQ205027">
    <property type="protein sequence ID" value="ADP90455.1"/>
    <property type="molecule type" value="Genomic_DNA"/>
</dbReference>
<dbReference type="EMBL" id="HQ205028">
    <property type="protein sequence ID" value="ADP90456.1"/>
    <property type="molecule type" value="Genomic_DNA"/>
</dbReference>
<dbReference type="EMBL" id="HQ205029">
    <property type="protein sequence ID" value="ADP90457.1"/>
    <property type="molecule type" value="Genomic_DNA"/>
</dbReference>
<dbReference type="EMBL" id="HQ205030">
    <property type="protein sequence ID" value="ADP90458.1"/>
    <property type="molecule type" value="Genomic_DNA"/>
</dbReference>
<dbReference type="EMBL" id="HQ205031">
    <property type="protein sequence ID" value="ADP90459.1"/>
    <property type="molecule type" value="Genomic_DNA"/>
</dbReference>
<dbReference type="EMBL" id="HQ205032">
    <property type="protein sequence ID" value="ADP90460.1"/>
    <property type="molecule type" value="Genomic_DNA"/>
</dbReference>
<dbReference type="EMBL" id="HQ205033">
    <property type="protein sequence ID" value="ADP90461.1"/>
    <property type="molecule type" value="Genomic_DNA"/>
</dbReference>
<dbReference type="EMBL" id="HQ205034">
    <property type="protein sequence ID" value="ADP90462.1"/>
    <property type="molecule type" value="Genomic_DNA"/>
</dbReference>
<dbReference type="EMBL" id="HQ205035">
    <property type="protein sequence ID" value="ADP90463.1"/>
    <property type="molecule type" value="Genomic_DNA"/>
</dbReference>
<dbReference type="EMBL" id="HQ205036">
    <property type="protein sequence ID" value="ADP90464.1"/>
    <property type="molecule type" value="Genomic_DNA"/>
</dbReference>
<dbReference type="EMBL" id="HQ205037">
    <property type="protein sequence ID" value="ADP90465.1"/>
    <property type="molecule type" value="Genomic_DNA"/>
</dbReference>
<dbReference type="EMBL" id="HQ205038">
    <property type="protein sequence ID" value="ADP90466.1"/>
    <property type="molecule type" value="Genomic_DNA"/>
</dbReference>
<dbReference type="EMBL" id="HQ205039">
    <property type="protein sequence ID" value="ADP90467.1"/>
    <property type="molecule type" value="Genomic_DNA"/>
</dbReference>
<dbReference type="EMBL" id="HQ205040">
    <property type="protein sequence ID" value="ADP90468.1"/>
    <property type="molecule type" value="Genomic_DNA"/>
</dbReference>
<dbReference type="EMBL" id="HQ205041">
    <property type="protein sequence ID" value="ADP90469.1"/>
    <property type="molecule type" value="Genomic_DNA"/>
</dbReference>
<dbReference type="EMBL" id="HQ205042">
    <property type="protein sequence ID" value="ADP90470.1"/>
    <property type="molecule type" value="Genomic_DNA"/>
</dbReference>
<dbReference type="EMBL" id="HQ205043">
    <property type="protein sequence ID" value="ADP90471.1"/>
    <property type="molecule type" value="Genomic_DNA"/>
</dbReference>
<dbReference type="EMBL" id="HQ205044">
    <property type="protein sequence ID" value="ADP90472.1"/>
    <property type="molecule type" value="Genomic_DNA"/>
</dbReference>
<dbReference type="EMBL" id="HQ205045">
    <property type="protein sequence ID" value="ADP90473.1"/>
    <property type="molecule type" value="Genomic_DNA"/>
</dbReference>
<dbReference type="EMBL" id="HQ205046">
    <property type="protein sequence ID" value="ADP90474.1"/>
    <property type="molecule type" value="Genomic_DNA"/>
</dbReference>
<dbReference type="EMBL" id="HQ205047">
    <property type="protein sequence ID" value="ADP90475.1"/>
    <property type="molecule type" value="Genomic_DNA"/>
</dbReference>
<dbReference type="EMBL" id="HQ205048">
    <property type="protein sequence ID" value="ADP90476.1"/>
    <property type="molecule type" value="Genomic_DNA"/>
</dbReference>
<dbReference type="EMBL" id="HQ205049">
    <property type="protein sequence ID" value="ADP90477.1"/>
    <property type="molecule type" value="Genomic_DNA"/>
</dbReference>
<dbReference type="EMBL" id="HQ205050">
    <property type="protein sequence ID" value="ADP90478.1"/>
    <property type="molecule type" value="Genomic_DNA"/>
</dbReference>
<dbReference type="EMBL" id="HQ205051">
    <property type="protein sequence ID" value="ADP90479.1"/>
    <property type="molecule type" value="Genomic_DNA"/>
</dbReference>
<dbReference type="EMBL" id="HQ205052">
    <property type="protein sequence ID" value="ADP90480.1"/>
    <property type="molecule type" value="Genomic_DNA"/>
</dbReference>
<dbReference type="EMBL" id="HQ205053">
    <property type="protein sequence ID" value="ADP90481.1"/>
    <property type="molecule type" value="Genomic_DNA"/>
</dbReference>
<dbReference type="EMBL" id="HQ205054">
    <property type="protein sequence ID" value="ADP90482.1"/>
    <property type="molecule type" value="Genomic_DNA"/>
</dbReference>
<dbReference type="EMBL" id="HQ205055">
    <property type="protein sequence ID" value="ADP90483.1"/>
    <property type="molecule type" value="Genomic_DNA"/>
</dbReference>
<dbReference type="EMBL" id="HQ205056">
    <property type="protein sequence ID" value="ADP90484.1"/>
    <property type="molecule type" value="Genomic_DNA"/>
</dbReference>
<dbReference type="EMBL" id="HQ205057">
    <property type="protein sequence ID" value="ADP90485.1"/>
    <property type="molecule type" value="Genomic_DNA"/>
</dbReference>
<dbReference type="EMBL" id="HQ205058">
    <property type="protein sequence ID" value="ADP90486.1"/>
    <property type="molecule type" value="Genomic_DNA"/>
</dbReference>
<dbReference type="EMBL" id="HQ205059">
    <property type="protein sequence ID" value="ADP90487.1"/>
    <property type="molecule type" value="Genomic_DNA"/>
</dbReference>
<dbReference type="EMBL" id="HQ205060">
    <property type="protein sequence ID" value="ADP90488.1"/>
    <property type="molecule type" value="Genomic_DNA"/>
</dbReference>
<dbReference type="EMBL" id="HQ205061">
    <property type="protein sequence ID" value="ADP90489.1"/>
    <property type="molecule type" value="Genomic_DNA"/>
</dbReference>
<dbReference type="EMBL" id="HQ205062">
    <property type="protein sequence ID" value="ADP90490.1"/>
    <property type="molecule type" value="Genomic_DNA"/>
</dbReference>
<dbReference type="EMBL" id="HQ205063">
    <property type="protein sequence ID" value="ADP90491.1"/>
    <property type="molecule type" value="Genomic_DNA"/>
</dbReference>
<dbReference type="EMBL" id="HQ205064">
    <property type="protein sequence ID" value="ADP90492.1"/>
    <property type="molecule type" value="Genomic_DNA"/>
</dbReference>
<dbReference type="EMBL" id="HQ205065">
    <property type="protein sequence ID" value="ADP90493.1"/>
    <property type="molecule type" value="Genomic_DNA"/>
</dbReference>
<dbReference type="EMBL" id="AK292926">
    <property type="protein sequence ID" value="BAF85615.1"/>
    <property type="molecule type" value="mRNA"/>
</dbReference>
<dbReference type="EMBL" id="AK296437">
    <property type="protein sequence ID" value="BAG59092.1"/>
    <property type="molecule type" value="mRNA"/>
</dbReference>
<dbReference type="EMBL" id="AC127537">
    <property type="status" value="NOT_ANNOTATED_CDS"/>
    <property type="molecule type" value="Genomic_DNA"/>
</dbReference>
<dbReference type="EMBL" id="CH471196">
    <property type="protein sequence ID" value="EAW55646.1"/>
    <property type="molecule type" value="Genomic_DNA"/>
</dbReference>
<dbReference type="EMBL" id="CH471196">
    <property type="protein sequence ID" value="EAW55648.1"/>
    <property type="molecule type" value="Genomic_DNA"/>
</dbReference>
<dbReference type="EMBL" id="CH471196">
    <property type="protein sequence ID" value="EAW55649.1"/>
    <property type="molecule type" value="Genomic_DNA"/>
</dbReference>
<dbReference type="EMBL" id="BC051748">
    <property type="protein sequence ID" value="AAH51748.1"/>
    <property type="molecule type" value="mRNA"/>
</dbReference>
<dbReference type="CCDS" id="CCDS11194.1">
    <molecule id="Q13472-1"/>
</dbReference>
<dbReference type="RefSeq" id="NP_001307688.1">
    <molecule id="Q13472-3"/>
    <property type="nucleotide sequence ID" value="NM_001320759.2"/>
</dbReference>
<dbReference type="RefSeq" id="NP_004609.1">
    <molecule id="Q13472-1"/>
    <property type="nucleotide sequence ID" value="NM_004618.5"/>
</dbReference>
<dbReference type="PDB" id="4CGY">
    <property type="method" value="X-ray"/>
    <property type="resolution" value="2.85 A"/>
    <property type="chains" value="A=2-753"/>
</dbReference>
<dbReference type="PDB" id="4CHT">
    <property type="method" value="X-ray"/>
    <property type="resolution" value="3.25 A"/>
    <property type="chains" value="A=2-753"/>
</dbReference>
<dbReference type="PDBsum" id="4CGY"/>
<dbReference type="PDBsum" id="4CHT"/>
<dbReference type="SMR" id="Q13472"/>
<dbReference type="BioGRID" id="113009">
    <property type="interactions" value="116"/>
</dbReference>
<dbReference type="ComplexPortal" id="CPX-3301">
    <property type="entry name" value="BTR double Holliday Junction dissolution complex"/>
</dbReference>
<dbReference type="CORUM" id="Q13472"/>
<dbReference type="DIP" id="DIP-33323N"/>
<dbReference type="FunCoup" id="Q13472">
    <property type="interactions" value="3221"/>
</dbReference>
<dbReference type="IntAct" id="Q13472">
    <property type="interactions" value="60"/>
</dbReference>
<dbReference type="MINT" id="Q13472"/>
<dbReference type="STRING" id="9606.ENSP00000321636"/>
<dbReference type="GlyGen" id="Q13472">
    <property type="glycosylation" value="3 sites, 1 N-linked glycan (1 site), 1 O-linked glycan (1 site)"/>
</dbReference>
<dbReference type="iPTMnet" id="Q13472"/>
<dbReference type="PhosphoSitePlus" id="Q13472"/>
<dbReference type="SwissPalm" id="Q13472"/>
<dbReference type="BioMuta" id="TOP3A"/>
<dbReference type="DMDM" id="2501242"/>
<dbReference type="jPOST" id="Q13472"/>
<dbReference type="MassIVE" id="Q13472"/>
<dbReference type="PaxDb" id="9606-ENSP00000442336"/>
<dbReference type="PeptideAtlas" id="Q13472"/>
<dbReference type="ProteomicsDB" id="4437"/>
<dbReference type="ProteomicsDB" id="59469">
    <molecule id="Q13472-1"/>
</dbReference>
<dbReference type="ProteomicsDB" id="59470">
    <molecule id="Q13472-2"/>
</dbReference>
<dbReference type="Pumba" id="Q13472"/>
<dbReference type="Antibodypedia" id="43348">
    <property type="antibodies" value="80 antibodies from 20 providers"/>
</dbReference>
<dbReference type="DNASU" id="7156"/>
<dbReference type="Ensembl" id="ENST00000321105.10">
    <molecule id="Q13472-1"/>
    <property type="protein sequence ID" value="ENSP00000321636.5"/>
    <property type="gene ID" value="ENSG00000177302.16"/>
</dbReference>
<dbReference type="Ensembl" id="ENST00000580095.5">
    <molecule id="Q13472-2"/>
    <property type="protein sequence ID" value="ENSP00000462790.1"/>
    <property type="gene ID" value="ENSG00000177302.16"/>
</dbReference>
<dbReference type="Ensembl" id="ENST00000639065.1">
    <molecule id="Q13472-2"/>
    <property type="protein sequence ID" value="ENSP00000491260.1"/>
    <property type="gene ID" value="ENSG00000284238.3"/>
</dbReference>
<dbReference type="Ensembl" id="ENST00000640743.2">
    <molecule id="Q13472-1"/>
    <property type="protein sequence ID" value="ENSP00000491689.1"/>
    <property type="gene ID" value="ENSG00000284238.3"/>
</dbReference>
<dbReference type="GeneID" id="7156"/>
<dbReference type="KEGG" id="hsa:7156"/>
<dbReference type="MANE-Select" id="ENST00000321105.10">
    <property type="protein sequence ID" value="ENSP00000321636.5"/>
    <property type="RefSeq nucleotide sequence ID" value="NM_004618.5"/>
    <property type="RefSeq protein sequence ID" value="NP_004609.1"/>
</dbReference>
<dbReference type="UCSC" id="uc002gsx.1">
    <molecule id="Q13472-1"/>
    <property type="organism name" value="human"/>
</dbReference>
<dbReference type="AGR" id="HGNC:11992"/>
<dbReference type="CTD" id="7156"/>
<dbReference type="DisGeNET" id="7156"/>
<dbReference type="GeneCards" id="TOP3A"/>
<dbReference type="HGNC" id="HGNC:11992">
    <property type="gene designation" value="TOP3A"/>
</dbReference>
<dbReference type="HPA" id="ENSG00000177302">
    <property type="expression patterns" value="Low tissue specificity"/>
</dbReference>
<dbReference type="MalaCards" id="TOP3A"/>
<dbReference type="MIM" id="601243">
    <property type="type" value="gene"/>
</dbReference>
<dbReference type="MIM" id="618097">
    <property type="type" value="phenotype"/>
</dbReference>
<dbReference type="MIM" id="618098">
    <property type="type" value="phenotype"/>
</dbReference>
<dbReference type="neXtProt" id="NX_Q13472"/>
<dbReference type="OpenTargets" id="ENSG00000177302"/>
<dbReference type="Orphanet" id="508512">
    <property type="disease" value="Intrauterine growth restriction-congenital multiple cafe-au-lait macules-increased sister chromatid exchange syndrome"/>
</dbReference>
<dbReference type="PharmGKB" id="PA36673"/>
<dbReference type="VEuPathDB" id="HostDB:ENSG00000177302"/>
<dbReference type="eggNOG" id="KOG1956">
    <property type="taxonomic scope" value="Eukaryota"/>
</dbReference>
<dbReference type="GeneTree" id="ENSGT00940000156701"/>
<dbReference type="HOGENOM" id="CLU_002929_1_2_1"/>
<dbReference type="InParanoid" id="Q13472"/>
<dbReference type="OMA" id="MELAMGD"/>
<dbReference type="OrthoDB" id="430051at2759"/>
<dbReference type="PAN-GO" id="Q13472">
    <property type="GO annotations" value="3 GO annotations based on evolutionary models"/>
</dbReference>
<dbReference type="PhylomeDB" id="Q13472"/>
<dbReference type="TreeFam" id="TF105287"/>
<dbReference type="PathwayCommons" id="Q13472"/>
<dbReference type="Reactome" id="R-HSA-5685938">
    <property type="pathway name" value="HDR through Single Strand Annealing (SSA)"/>
</dbReference>
<dbReference type="Reactome" id="R-HSA-5685942">
    <property type="pathway name" value="HDR through Homologous Recombination (HRR)"/>
</dbReference>
<dbReference type="Reactome" id="R-HSA-5693554">
    <property type="pathway name" value="Resolution of D-loop Structures through Synthesis-Dependent Strand Annealing (SDSA)"/>
</dbReference>
<dbReference type="Reactome" id="R-HSA-5693568">
    <property type="pathway name" value="Resolution of D-loop Structures through Holliday Junction Intermediates"/>
</dbReference>
<dbReference type="Reactome" id="R-HSA-5693579">
    <property type="pathway name" value="Homologous DNA Pairing and Strand Exchange"/>
</dbReference>
<dbReference type="Reactome" id="R-HSA-5693607">
    <property type="pathway name" value="Processing of DNA double-strand break ends"/>
</dbReference>
<dbReference type="Reactome" id="R-HSA-5693616">
    <property type="pathway name" value="Presynaptic phase of homologous DNA pairing and strand exchange"/>
</dbReference>
<dbReference type="Reactome" id="R-HSA-6804756">
    <property type="pathway name" value="Regulation of TP53 Activity through Phosphorylation"/>
</dbReference>
<dbReference type="Reactome" id="R-HSA-69473">
    <property type="pathway name" value="G2/M DNA damage checkpoint"/>
</dbReference>
<dbReference type="Reactome" id="R-HSA-912446">
    <property type="pathway name" value="Meiotic recombination"/>
</dbReference>
<dbReference type="Reactome" id="R-HSA-9701192">
    <property type="pathway name" value="Defective homologous recombination repair (HRR) due to BRCA1 loss of function"/>
</dbReference>
<dbReference type="Reactome" id="R-HSA-9704331">
    <property type="pathway name" value="Defective HDR through Homologous Recombination Repair (HRR) due to PALB2 loss of BRCA1 binding function"/>
</dbReference>
<dbReference type="Reactome" id="R-HSA-9704646">
    <property type="pathway name" value="Defective HDR through Homologous Recombination Repair (HRR) due to PALB2 loss of BRCA2/RAD51/RAD51C binding function"/>
</dbReference>
<dbReference type="Reactome" id="R-HSA-9709570">
    <property type="pathway name" value="Impaired BRCA2 binding to RAD51"/>
</dbReference>
<dbReference type="Reactome" id="R-HSA-9709603">
    <property type="pathway name" value="Impaired BRCA2 binding to PALB2"/>
</dbReference>
<dbReference type="Reactome" id="R-HSA-9913635">
    <property type="pathway name" value="Strand-asynchronous mitochondrial DNA replication"/>
</dbReference>
<dbReference type="SignaLink" id="Q13472"/>
<dbReference type="BioGRID-ORCS" id="7156">
    <property type="hits" value="765 hits in 1172 CRISPR screens"/>
</dbReference>
<dbReference type="ChiTaRS" id="TOP3A">
    <property type="organism name" value="human"/>
</dbReference>
<dbReference type="EvolutionaryTrace" id="Q13472"/>
<dbReference type="GeneWiki" id="TOP3A"/>
<dbReference type="GenomeRNAi" id="7156"/>
<dbReference type="Pharos" id="Q13472">
    <property type="development level" value="Tbio"/>
</dbReference>
<dbReference type="PRO" id="PR:Q13472"/>
<dbReference type="Proteomes" id="UP000005640">
    <property type="component" value="Chromosome 17"/>
</dbReference>
<dbReference type="RNAct" id="Q13472">
    <property type="molecule type" value="protein"/>
</dbReference>
<dbReference type="Bgee" id="ENSG00000177302">
    <property type="expression patterns" value="Expressed in blood and 109 other cell types or tissues"/>
</dbReference>
<dbReference type="ExpressionAtlas" id="Q13472">
    <property type="expression patterns" value="baseline and differential"/>
</dbReference>
<dbReference type="GO" id="GO:0005759">
    <property type="term" value="C:mitochondrial matrix"/>
    <property type="evidence" value="ECO:0000304"/>
    <property type="project" value="Reactome"/>
</dbReference>
<dbReference type="GO" id="GO:0005739">
    <property type="term" value="C:mitochondrion"/>
    <property type="evidence" value="ECO:0006056"/>
    <property type="project" value="FlyBase"/>
</dbReference>
<dbReference type="GO" id="GO:0005654">
    <property type="term" value="C:nucleoplasm"/>
    <property type="evidence" value="ECO:0000304"/>
    <property type="project" value="Reactome"/>
</dbReference>
<dbReference type="GO" id="GO:0005634">
    <property type="term" value="C:nucleus"/>
    <property type="evidence" value="ECO:0000318"/>
    <property type="project" value="GO_Central"/>
</dbReference>
<dbReference type="GO" id="GO:0016605">
    <property type="term" value="C:PML body"/>
    <property type="evidence" value="ECO:0000314"/>
    <property type="project" value="UniProtKB"/>
</dbReference>
<dbReference type="GO" id="GO:0031422">
    <property type="term" value="C:RecQ family helicase-topoisomerase III complex"/>
    <property type="evidence" value="ECO:0000353"/>
    <property type="project" value="ComplexPortal"/>
</dbReference>
<dbReference type="GO" id="GO:0003677">
    <property type="term" value="F:DNA binding"/>
    <property type="evidence" value="ECO:0000304"/>
    <property type="project" value="ProtInc"/>
</dbReference>
<dbReference type="GO" id="GO:0003917">
    <property type="term" value="F:DNA topoisomerase type I (single strand cut, ATP-independent) activity"/>
    <property type="evidence" value="ECO:0000314"/>
    <property type="project" value="UniProtKB"/>
</dbReference>
<dbReference type="GO" id="GO:0003697">
    <property type="term" value="F:single-stranded DNA binding"/>
    <property type="evidence" value="ECO:0000314"/>
    <property type="project" value="UniProtKB"/>
</dbReference>
<dbReference type="GO" id="GO:0008270">
    <property type="term" value="F:zinc ion binding"/>
    <property type="evidence" value="ECO:0007669"/>
    <property type="project" value="UniProtKB-KW"/>
</dbReference>
<dbReference type="GO" id="GO:0051304">
    <property type="term" value="P:chromosome separation"/>
    <property type="evidence" value="ECO:0000315"/>
    <property type="project" value="UniProtKB"/>
</dbReference>
<dbReference type="GO" id="GO:0006310">
    <property type="term" value="P:DNA recombination"/>
    <property type="evidence" value="ECO:0000318"/>
    <property type="project" value="GO_Central"/>
</dbReference>
<dbReference type="GO" id="GO:0006281">
    <property type="term" value="P:DNA repair"/>
    <property type="evidence" value="ECO:0000318"/>
    <property type="project" value="GO_Central"/>
</dbReference>
<dbReference type="GO" id="GO:0006265">
    <property type="term" value="P:DNA topological change"/>
    <property type="evidence" value="ECO:0000314"/>
    <property type="project" value="UniProtKB"/>
</dbReference>
<dbReference type="GO" id="GO:0000724">
    <property type="term" value="P:double-strand break repair via homologous recombination"/>
    <property type="evidence" value="ECO:0000314"/>
    <property type="project" value="ComplexPortal"/>
</dbReference>
<dbReference type="GO" id="GO:0051321">
    <property type="term" value="P:meiotic cell cycle"/>
    <property type="evidence" value="ECO:0000304"/>
    <property type="project" value="ProtInc"/>
</dbReference>
<dbReference type="GO" id="GO:0032042">
    <property type="term" value="P:mitochondrial DNA metabolic process"/>
    <property type="evidence" value="ECO:0000315"/>
    <property type="project" value="UniProtKB"/>
</dbReference>
<dbReference type="GO" id="GO:0071139">
    <property type="term" value="P:resolution of DNA recombination intermediates"/>
    <property type="evidence" value="ECO:0000314"/>
    <property type="project" value="ComplexPortal"/>
</dbReference>
<dbReference type="CDD" id="cd00186">
    <property type="entry name" value="TOP1Ac"/>
    <property type="match status" value="1"/>
</dbReference>
<dbReference type="CDD" id="cd03362">
    <property type="entry name" value="TOPRIM_TopoIA_TopoIII"/>
    <property type="match status" value="1"/>
</dbReference>
<dbReference type="FunFam" id="1.10.290.10:FF:000001">
    <property type="entry name" value="DNA topoisomerase"/>
    <property type="match status" value="1"/>
</dbReference>
<dbReference type="FunFam" id="2.70.20.10:FF:000004">
    <property type="entry name" value="DNA topoisomerase"/>
    <property type="match status" value="1"/>
</dbReference>
<dbReference type="FunFam" id="3.30.65.10:FF:000007">
    <property type="entry name" value="DNA topoisomerase"/>
    <property type="match status" value="1"/>
</dbReference>
<dbReference type="FunFam" id="3.40.50.140:FF:000003">
    <property type="entry name" value="DNA topoisomerase"/>
    <property type="match status" value="1"/>
</dbReference>
<dbReference type="FunFam" id="1.10.460.10:FF:000020">
    <property type="entry name" value="DNA topoisomerase 3-alpha"/>
    <property type="match status" value="1"/>
</dbReference>
<dbReference type="Gene3D" id="3.40.50.140">
    <property type="match status" value="1"/>
</dbReference>
<dbReference type="Gene3D" id="3.30.65.10">
    <property type="entry name" value="Bacterial Topoisomerase I, domain 1"/>
    <property type="match status" value="1"/>
</dbReference>
<dbReference type="Gene3D" id="1.10.460.10">
    <property type="entry name" value="Topoisomerase I, domain 2"/>
    <property type="match status" value="1"/>
</dbReference>
<dbReference type="Gene3D" id="2.70.20.10">
    <property type="entry name" value="Topoisomerase I, domain 3"/>
    <property type="match status" value="1"/>
</dbReference>
<dbReference type="Gene3D" id="1.10.290.10">
    <property type="entry name" value="Topoisomerase I, domain 4"/>
    <property type="match status" value="1"/>
</dbReference>
<dbReference type="InterPro" id="IPR000380">
    <property type="entry name" value="Topo_IA"/>
</dbReference>
<dbReference type="InterPro" id="IPR003601">
    <property type="entry name" value="Topo_IA_2"/>
</dbReference>
<dbReference type="InterPro" id="IPR023406">
    <property type="entry name" value="Topo_IA_AS"/>
</dbReference>
<dbReference type="InterPro" id="IPR013497">
    <property type="entry name" value="Topo_IA_cen"/>
</dbReference>
<dbReference type="InterPro" id="IPR013824">
    <property type="entry name" value="Topo_IA_cen_sub1"/>
</dbReference>
<dbReference type="InterPro" id="IPR013825">
    <property type="entry name" value="Topo_IA_cen_sub2"/>
</dbReference>
<dbReference type="InterPro" id="IPR013826">
    <property type="entry name" value="Topo_IA_cen_sub3"/>
</dbReference>
<dbReference type="InterPro" id="IPR023405">
    <property type="entry name" value="Topo_IA_core_domain"/>
</dbReference>
<dbReference type="InterPro" id="IPR003602">
    <property type="entry name" value="Topo_IA_DNA-bd_dom"/>
</dbReference>
<dbReference type="InterPro" id="IPR013498">
    <property type="entry name" value="Topo_IA_Znf"/>
</dbReference>
<dbReference type="InterPro" id="IPR006171">
    <property type="entry name" value="TOPRIM_dom"/>
</dbReference>
<dbReference type="InterPro" id="IPR034144">
    <property type="entry name" value="TOPRIM_TopoIII"/>
</dbReference>
<dbReference type="InterPro" id="IPR010666">
    <property type="entry name" value="Znf_GRF"/>
</dbReference>
<dbReference type="PANTHER" id="PTHR11390:SF21">
    <property type="entry name" value="DNA TOPOISOMERASE 3-ALPHA"/>
    <property type="match status" value="1"/>
</dbReference>
<dbReference type="PANTHER" id="PTHR11390">
    <property type="entry name" value="PROKARYOTIC DNA TOPOISOMERASE"/>
    <property type="match status" value="1"/>
</dbReference>
<dbReference type="Pfam" id="PF01131">
    <property type="entry name" value="Topoisom_bac"/>
    <property type="match status" value="1"/>
</dbReference>
<dbReference type="Pfam" id="PF01751">
    <property type="entry name" value="Toprim"/>
    <property type="match status" value="1"/>
</dbReference>
<dbReference type="Pfam" id="PF06839">
    <property type="entry name" value="Zn_ribbon_GRF"/>
    <property type="match status" value="2"/>
</dbReference>
<dbReference type="Pfam" id="PF01396">
    <property type="entry name" value="Zn_ribbon_Top1"/>
    <property type="match status" value="1"/>
</dbReference>
<dbReference type="PRINTS" id="PR00417">
    <property type="entry name" value="PRTPISMRASEI"/>
</dbReference>
<dbReference type="SMART" id="SM00437">
    <property type="entry name" value="TOP1Ac"/>
    <property type="match status" value="1"/>
</dbReference>
<dbReference type="SMART" id="SM00436">
    <property type="entry name" value="TOP1Bc"/>
    <property type="match status" value="1"/>
</dbReference>
<dbReference type="SMART" id="SM00493">
    <property type="entry name" value="TOPRIM"/>
    <property type="match status" value="1"/>
</dbReference>
<dbReference type="SUPFAM" id="SSF56712">
    <property type="entry name" value="Prokaryotic type I DNA topoisomerase"/>
    <property type="match status" value="1"/>
</dbReference>
<dbReference type="SUPFAM" id="SSF57783">
    <property type="entry name" value="Zinc beta-ribbon"/>
    <property type="match status" value="1"/>
</dbReference>
<dbReference type="PROSITE" id="PS00396">
    <property type="entry name" value="TOPO_IA_1"/>
    <property type="match status" value="1"/>
</dbReference>
<dbReference type="PROSITE" id="PS52039">
    <property type="entry name" value="TOPO_IA_2"/>
    <property type="match status" value="1"/>
</dbReference>
<dbReference type="PROSITE" id="PS50880">
    <property type="entry name" value="TOPRIM"/>
    <property type="match status" value="1"/>
</dbReference>
<dbReference type="PROSITE" id="PS51999">
    <property type="entry name" value="ZF_GRF"/>
    <property type="match status" value="2"/>
</dbReference>
<feature type="chain" id="PRO_0000145190" description="DNA topoisomerase 3-alpha">
    <location>
        <begin position="1"/>
        <end position="1001"/>
    </location>
</feature>
<feature type="domain" description="Toprim" evidence="2">
    <location>
        <begin position="35"/>
        <end position="179"/>
    </location>
</feature>
<feature type="domain" description="Topo IA-type catalytic" evidence="4">
    <location>
        <begin position="197"/>
        <end position="617"/>
    </location>
</feature>
<feature type="zinc finger region" description="C4-type" evidence="1">
    <location>
        <begin position="658"/>
        <end position="685"/>
    </location>
</feature>
<feature type="zinc finger region" description="GRF-type 1" evidence="3">
    <location>
        <begin position="813"/>
        <end position="852"/>
    </location>
</feature>
<feature type="zinc finger region" description="GRF-type 2" evidence="3">
    <location>
        <begin position="897"/>
        <end position="939"/>
    </location>
</feature>
<feature type="region of interest" description="Disordered" evidence="6">
    <location>
        <begin position="400"/>
        <end position="424"/>
    </location>
</feature>
<feature type="region of interest" description="Disordered" evidence="6">
    <location>
        <begin position="774"/>
        <end position="810"/>
    </location>
</feature>
<feature type="region of interest" description="Disordered" evidence="6">
    <location>
        <begin position="937"/>
        <end position="1001"/>
    </location>
</feature>
<feature type="compositionally biased region" description="Polar residues" evidence="6">
    <location>
        <begin position="774"/>
        <end position="792"/>
    </location>
</feature>
<feature type="compositionally biased region" description="Basic and acidic residues" evidence="6">
    <location>
        <begin position="953"/>
        <end position="964"/>
    </location>
</feature>
<feature type="active site" description="O-(5'-phospho-DNA)-tyrosine intermediate" evidence="4">
    <location>
        <position position="362"/>
    </location>
</feature>
<feature type="binding site" evidence="3">
    <location>
        <position position="813"/>
    </location>
    <ligand>
        <name>Zn(2+)</name>
        <dbReference type="ChEBI" id="CHEBI:29105"/>
        <label>1</label>
    </ligand>
</feature>
<feature type="binding site" evidence="3">
    <location>
        <position position="815"/>
    </location>
    <ligand>
        <name>Zn(2+)</name>
        <dbReference type="ChEBI" id="CHEBI:29105"/>
        <label>1</label>
    </ligand>
</feature>
<feature type="binding site" evidence="3">
    <location>
        <position position="838"/>
    </location>
    <ligand>
        <name>Zn(2+)</name>
        <dbReference type="ChEBI" id="CHEBI:29105"/>
        <label>1</label>
    </ligand>
</feature>
<feature type="binding site" evidence="3">
    <location>
        <position position="843"/>
    </location>
    <ligand>
        <name>Zn(2+)</name>
        <dbReference type="ChEBI" id="CHEBI:29105"/>
        <label>1</label>
    </ligand>
</feature>
<feature type="binding site" evidence="3">
    <location>
        <position position="897"/>
    </location>
    <ligand>
        <name>Zn(2+)</name>
        <dbReference type="ChEBI" id="CHEBI:29105"/>
        <label>2</label>
    </ligand>
</feature>
<feature type="binding site" evidence="3">
    <location>
        <position position="899"/>
    </location>
    <ligand>
        <name>Zn(2+)</name>
        <dbReference type="ChEBI" id="CHEBI:29105"/>
        <label>2</label>
    </ligand>
</feature>
<feature type="binding site" evidence="3">
    <location>
        <position position="922"/>
    </location>
    <ligand>
        <name>Zn(2+)</name>
        <dbReference type="ChEBI" id="CHEBI:29105"/>
        <label>2</label>
    </ligand>
</feature>
<feature type="binding site" evidence="3">
    <location>
        <position position="930"/>
    </location>
    <ligand>
        <name>Zn(2+)</name>
        <dbReference type="ChEBI" id="CHEBI:29105"/>
        <label>2</label>
    </ligand>
</feature>
<feature type="splice variant" id="VSP_054189" description="In isoform 3." evidence="15">
    <original>MIFPVARYALRWLRRPEDRAFSRAAMEMALRGVRKVLCVAEKNDAAKGIADLLSNGRMRRREGLSKFNKIYEFDYHLYGQNVTMVMTSVSGHLLAHDFQMQFRKW</original>
    <variation>MNLIIICMAR</variation>
    <location>
        <begin position="1"/>
        <end position="105"/>
    </location>
</feature>
<feature type="splice variant" id="VSP_006524" description="In isoform Short." evidence="16">
    <location>
        <begin position="1"/>
        <end position="25"/>
    </location>
</feature>
<feature type="sequence variant" id="VAR_081105" description="In PEOB5; results in decreased DNA decatenation; dbSNP:rs376902371." evidence="12">
    <original>M</original>
    <variation>V</variation>
    <location>
        <position position="100"/>
    </location>
</feature>
<feature type="sequence variant" id="VAR_081106" description="In PEOB5." evidence="12">
    <location>
        <begin position="135"/>
        <end position="1001"/>
    </location>
</feature>
<feature type="sequence variant" id="VAR_081107" description="In MGRISCE2." evidence="13">
    <original>A</original>
    <variation>V</variation>
    <location>
        <position position="176"/>
    </location>
</feature>
<feature type="sequence variant" id="VAR_052588" description="In dbSNP:rs28671051.">
    <original>D</original>
    <variation>N</variation>
    <location>
        <position position="459"/>
    </location>
</feature>
<feature type="sequence variant" id="VAR_007529">
    <original>C</original>
    <variation>Y</variation>
    <location>
        <position position="596"/>
    </location>
</feature>
<feature type="sequence variant" id="VAR_052589" description="In dbSNP:rs9909732.">
    <original>D</original>
    <variation>N</variation>
    <location>
        <position position="742"/>
    </location>
</feature>
<feature type="sequence variant" id="VAR_052590" description="In dbSNP:rs9911283.">
    <original>N</original>
    <variation>D</variation>
    <location>
        <position position="773"/>
    </location>
</feature>
<feature type="mutagenesis site" description="Decreased DNA decatenation." evidence="12">
    <original>Y</original>
    <variation>F</variation>
    <location>
        <position position="362"/>
    </location>
</feature>
<feature type="helix" evidence="18">
    <location>
        <begin position="23"/>
        <end position="30"/>
    </location>
</feature>
<feature type="strand" evidence="18">
    <location>
        <begin position="35"/>
        <end position="42"/>
    </location>
</feature>
<feature type="helix" evidence="18">
    <location>
        <begin position="43"/>
        <end position="54"/>
    </location>
</feature>
<feature type="strand" evidence="18">
    <location>
        <begin position="59"/>
        <end position="61"/>
    </location>
</feature>
<feature type="strand" evidence="18">
    <location>
        <begin position="70"/>
        <end position="77"/>
    </location>
</feature>
<feature type="strand" evidence="18">
    <location>
        <begin position="80"/>
        <end position="88"/>
    </location>
</feature>
<feature type="strand" evidence="18">
    <location>
        <begin position="95"/>
        <end position="98"/>
    </location>
</feature>
<feature type="helix" evidence="18">
    <location>
        <begin position="100"/>
        <end position="103"/>
    </location>
</feature>
<feature type="helix" evidence="18">
    <location>
        <begin position="105"/>
        <end position="107"/>
    </location>
</feature>
<feature type="helix" evidence="18">
    <location>
        <begin position="110"/>
        <end position="114"/>
    </location>
</feature>
<feature type="strand" evidence="18">
    <location>
        <begin position="118"/>
        <end position="121"/>
    </location>
</feature>
<feature type="helix" evidence="18">
    <location>
        <begin position="124"/>
        <end position="126"/>
    </location>
</feature>
<feature type="helix" evidence="18">
    <location>
        <begin position="127"/>
        <end position="139"/>
    </location>
</feature>
<feature type="strand" evidence="18">
    <location>
        <begin position="141"/>
        <end position="147"/>
    </location>
</feature>
<feature type="helix" evidence="18">
    <location>
        <begin position="151"/>
        <end position="165"/>
    </location>
</feature>
<feature type="strand" evidence="18">
    <location>
        <begin position="172"/>
        <end position="175"/>
    </location>
</feature>
<feature type="helix" evidence="18">
    <location>
        <begin position="183"/>
        <end position="191"/>
    </location>
</feature>
<feature type="helix" evidence="18">
    <location>
        <begin position="198"/>
        <end position="229"/>
    </location>
</feature>
<feature type="helix" evidence="18">
    <location>
        <begin position="231"/>
        <end position="234"/>
    </location>
</feature>
<feature type="helix" evidence="18">
    <location>
        <begin position="245"/>
        <end position="261"/>
    </location>
</feature>
<feature type="strand" evidence="18">
    <location>
        <begin position="266"/>
        <end position="276"/>
    </location>
</feature>
<feature type="strand" evidence="18">
    <location>
        <begin position="279"/>
        <end position="285"/>
    </location>
</feature>
<feature type="helix" evidence="18">
    <location>
        <begin position="293"/>
        <end position="304"/>
    </location>
</feature>
<feature type="strand" evidence="18">
    <location>
        <begin position="309"/>
        <end position="321"/>
    </location>
</feature>
<feature type="helix" evidence="18">
    <location>
        <begin position="329"/>
        <end position="338"/>
    </location>
</feature>
<feature type="helix" evidence="18">
    <location>
        <begin position="344"/>
        <end position="356"/>
    </location>
</feature>
<feature type="helix" evidence="18">
    <location>
        <begin position="376"/>
        <end position="381"/>
    </location>
</feature>
<feature type="turn" evidence="18">
    <location>
        <begin position="382"/>
        <end position="385"/>
    </location>
</feature>
<feature type="turn" evidence="18">
    <location>
        <begin position="387"/>
        <end position="389"/>
    </location>
</feature>
<feature type="helix" evidence="18">
    <location>
        <begin position="390"/>
        <end position="398"/>
    </location>
</feature>
<feature type="helix" evidence="18">
    <location>
        <begin position="428"/>
        <end position="444"/>
    </location>
</feature>
<feature type="strand" evidence="18">
    <location>
        <begin position="449"/>
        <end position="460"/>
    </location>
</feature>
<feature type="strand" evidence="18">
    <location>
        <begin position="463"/>
        <end position="474"/>
    </location>
</feature>
<feature type="helix" evidence="18">
    <location>
        <begin position="476"/>
        <end position="479"/>
    </location>
</feature>
<feature type="strand" evidence="18">
    <location>
        <begin position="503"/>
        <end position="511"/>
    </location>
</feature>
<feature type="helix" evidence="18">
    <location>
        <begin position="520"/>
        <end position="530"/>
    </location>
</feature>
<feature type="turn" evidence="18">
    <location>
        <begin position="534"/>
        <end position="537"/>
    </location>
</feature>
<feature type="helix" evidence="18">
    <location>
        <begin position="538"/>
        <end position="547"/>
    </location>
</feature>
<feature type="strand" evidence="18">
    <location>
        <begin position="550"/>
        <end position="553"/>
    </location>
</feature>
<feature type="strand" evidence="18">
    <location>
        <begin position="559"/>
        <end position="561"/>
    </location>
</feature>
<feature type="helix" evidence="18">
    <location>
        <begin position="563"/>
        <end position="573"/>
    </location>
</feature>
<feature type="helix" evidence="18">
    <location>
        <begin position="583"/>
        <end position="596"/>
    </location>
</feature>
<feature type="helix" evidence="18">
    <location>
        <begin position="602"/>
        <end position="622"/>
    </location>
</feature>
<feature type="helix" evidence="18">
    <location>
        <begin position="625"/>
        <end position="635"/>
    </location>
</feature>
<proteinExistence type="evidence at protein level"/>
<keyword id="KW-0002">3D-structure</keyword>
<keyword id="KW-0025">Alternative splicing</keyword>
<keyword id="KW-0225">Disease variant</keyword>
<keyword id="KW-0238">DNA-binding</keyword>
<keyword id="KW-0242">Dwarfism</keyword>
<keyword id="KW-0413">Isomerase</keyword>
<keyword id="KW-0460">Magnesium</keyword>
<keyword id="KW-0479">Metal-binding</keyword>
<keyword id="KW-0496">Mitochondrion</keyword>
<keyword id="KW-1274">Primary mitochondrial disease</keyword>
<keyword id="KW-0935">Progressive external ophthalmoplegia</keyword>
<keyword id="KW-1267">Proteomics identification</keyword>
<keyword id="KW-1185">Reference proteome</keyword>
<keyword id="KW-0677">Repeat</keyword>
<keyword id="KW-0799">Topoisomerase</keyword>
<keyword id="KW-0862">Zinc</keyword>
<keyword id="KW-0863">Zinc-finger</keyword>
<protein>
    <recommendedName>
        <fullName>DNA topoisomerase 3-alpha</fullName>
        <ecNumber evidence="5 10 14">5.6.2.1</ecNumber>
    </recommendedName>
    <alternativeName>
        <fullName>DNA topoisomerase III alpha</fullName>
    </alternativeName>
</protein>
<name>TOP3A_HUMAN</name>
<comment type="function">
    <text evidence="10 12 13 14">Releases the supercoiling and torsional tension of DNA introduced during the DNA replication and transcription by transiently cleaving and rejoining one strand of the DNA duplex. Introduces a single-strand break via transesterification at a target site in duplex DNA. The scissile phosphodiester is attacked by the catalytic tyrosine of the enzyme, resulting in the formation of a DNA-(5'-phosphotyrosyl)-enzyme intermediate and the expulsion of a 3'-OH DNA strand. The free DNA strand then undergoes passage around the unbroken strand thus removing DNA supercoils. Finally, in the religation step, the DNA 3'-OH attacks the covalent intermediate to expel the active-site tyrosine and restore the DNA phosphodiester backbone. As an essential component of the RMI complex it is involved in chromosome separation and the processing of homologous recombination intermediates to limit DNA crossover formation in cells. Has DNA decatenation activity (PubMed:30057030). It is required for mtDNA decatenation and segregation after completion of replication, in a process that does not require BLM, RMI1 and RMI2 (PubMed:29290614).</text>
</comment>
<comment type="catalytic activity">
    <reaction evidence="5 10 14">
        <text>ATP-independent breakage of single-stranded DNA, followed by passage and rejoining.</text>
        <dbReference type="EC" id="5.6.2.1"/>
    </reaction>
</comment>
<comment type="cofactor">
    <cofactor evidence="10">
        <name>Mg(2+)</name>
        <dbReference type="ChEBI" id="CHEBI:18420"/>
    </cofactor>
</comment>
<comment type="subunit">
    <text evidence="7 8 9 10 11 12">Binds ssDNA (PubMed:29290614). Interacts (via N-terminal region) with BLM; the interaction is direct. Directly interacts with RMI1. Component of the RMI complex, containing at least TOP3A, RMI1 and RMI2. The RMI complex interacts with BLM.</text>
</comment>
<comment type="interaction">
    <interactant intactId="EBI-621345">
        <id>Q13472</id>
    </interactant>
    <interactant intactId="EBI-621372">
        <id>P54132</id>
        <label>BLM</label>
    </interactant>
    <organismsDiffer>false</organismsDiffer>
    <experiments>10</experiments>
</comment>
<comment type="interaction">
    <interactant intactId="EBI-621345">
        <id>Q13472</id>
    </interactant>
    <interactant intactId="EBI-621339">
        <id>Q9H9A7</id>
        <label>RMI1</label>
    </interactant>
    <organismsDiffer>false</organismsDiffer>
    <experiments>11</experiments>
</comment>
<comment type="subcellular location">
    <subcellularLocation>
        <location evidence="12">Mitochondrion matrix</location>
    </subcellularLocation>
</comment>
<comment type="alternative products">
    <event type="alternative splicing"/>
    <isoform>
        <id>Q13472-1</id>
        <name>Long</name>
        <sequence type="displayed"/>
    </isoform>
    <isoform>
        <id>Q13472-2</id>
        <name>Short</name>
        <sequence type="described" ref="VSP_006524"/>
    </isoform>
    <isoform>
        <id>Q13472-3</id>
        <name>3</name>
        <sequence type="described" ref="VSP_054189"/>
    </isoform>
</comment>
<comment type="tissue specificity">
    <text>High expression is found in testis, heart, skeletal muscle and pancreas.</text>
</comment>
<comment type="disease" evidence="13">
    <disease id="DI-05320">
        <name>Microcephaly, growth restriction, and increased sister chromatid exchange 2</name>
        <acronym>MGRISCE2</acronym>
        <description>An autosomal recessive disorder characterized by intrauterine growth restriction, poor postnatal growth with short stature and microcephaly, and increased sister chromatid exchange on cell studies.</description>
        <dbReference type="MIM" id="618097"/>
    </disease>
    <text>The disease is caused by variants affecting the gene represented in this entry.</text>
</comment>
<comment type="disease" evidence="12">
    <disease id="DI-05301">
        <name>Progressive external ophthalmoplegia with mitochondrial DNA deletions, autosomal recessive 5</name>
        <acronym>PEOB5</acronym>
        <description>A form of progressive external ophthalmoplegia, a mitochondrial myopathy characterized by progressive paralysis of the levator palpebrae, orbicularis oculi, and extraocular muscles. PEOB5 features include slowly progressive ptosis, intermittent double vision, cardiac arrhythmias, exercise intolerance, proximal limb and neck muscle weakness, and cerebellar ataxia. Patients skeletal muscle biopsy show numerous COX-deficient ragged-red fibers, increased mtDNA deletions, and extensive variable mtDNA rearrangements.</description>
        <dbReference type="MIM" id="618098"/>
    </disease>
    <text>The disease is caused by variants affecting the gene represented in this entry.</text>
</comment>
<comment type="similarity">
    <text evidence="4 17">Belongs to the type IA topoisomerase family.</text>
</comment>
<organism>
    <name type="scientific">Homo sapiens</name>
    <name type="common">Human</name>
    <dbReference type="NCBI Taxonomy" id="9606"/>
    <lineage>
        <taxon>Eukaryota</taxon>
        <taxon>Metazoa</taxon>
        <taxon>Chordata</taxon>
        <taxon>Craniata</taxon>
        <taxon>Vertebrata</taxon>
        <taxon>Euteleostomi</taxon>
        <taxon>Mammalia</taxon>
        <taxon>Eutheria</taxon>
        <taxon>Euarchontoglires</taxon>
        <taxon>Primates</taxon>
        <taxon>Haplorrhini</taxon>
        <taxon>Catarrhini</taxon>
        <taxon>Hominidae</taxon>
        <taxon>Homo</taxon>
    </lineage>
</organism>
<accession>Q13472</accession>
<accession>A8KA61</accession>
<accession>B4DK80</accession>
<accession>D3DXC7</accession>
<accession>Q13473</accession>
<evidence type="ECO:0000255" key="1"/>
<evidence type="ECO:0000255" key="2">
    <source>
        <dbReference type="PROSITE-ProRule" id="PRU00995"/>
    </source>
</evidence>
<evidence type="ECO:0000255" key="3">
    <source>
        <dbReference type="PROSITE-ProRule" id="PRU01343"/>
    </source>
</evidence>
<evidence type="ECO:0000255" key="4">
    <source>
        <dbReference type="PROSITE-ProRule" id="PRU01383"/>
    </source>
</evidence>
<evidence type="ECO:0000255" key="5">
    <source>
        <dbReference type="PROSITE-ProRule" id="PRU10131"/>
    </source>
</evidence>
<evidence type="ECO:0000256" key="6">
    <source>
        <dbReference type="SAM" id="MobiDB-lite"/>
    </source>
</evidence>
<evidence type="ECO:0000269" key="7">
    <source>
    </source>
</evidence>
<evidence type="ECO:0000269" key="8">
    <source>
    </source>
</evidence>
<evidence type="ECO:0000269" key="9">
    <source>
    </source>
</evidence>
<evidence type="ECO:0000269" key="10">
    <source>
    </source>
</evidence>
<evidence type="ECO:0000269" key="11">
    <source>
    </source>
</evidence>
<evidence type="ECO:0000269" key="12">
    <source>
    </source>
</evidence>
<evidence type="ECO:0000269" key="13">
    <source>
    </source>
</evidence>
<evidence type="ECO:0000269" key="14">
    <source>
    </source>
</evidence>
<evidence type="ECO:0000303" key="15">
    <source>
    </source>
</evidence>
<evidence type="ECO:0000303" key="16">
    <source>
    </source>
</evidence>
<evidence type="ECO:0000305" key="17"/>
<evidence type="ECO:0007829" key="18">
    <source>
        <dbReference type="PDB" id="4CGY"/>
    </source>
</evidence>